<evidence type="ECO:0000250" key="1">
    <source>
        <dbReference type="UniProtKB" id="P70182"/>
    </source>
</evidence>
<evidence type="ECO:0000250" key="2">
    <source>
        <dbReference type="UniProtKB" id="Q99755"/>
    </source>
</evidence>
<evidence type="ECO:0000255" key="3">
    <source>
        <dbReference type="PROSITE-ProRule" id="PRU00781"/>
    </source>
</evidence>
<evidence type="ECO:0000256" key="4">
    <source>
        <dbReference type="SAM" id="MobiDB-lite"/>
    </source>
</evidence>
<evidence type="ECO:0000269" key="5">
    <source>
    </source>
</evidence>
<evidence type="ECO:0000312" key="6">
    <source>
        <dbReference type="RGD" id="1306127"/>
    </source>
</evidence>
<proteinExistence type="evidence at protein level"/>
<sequence length="546" mass="60605">MASASSGPAAAGFSPLDSGVPAGTAASGIKRGTVSEGPYASLMPVKKIGHRSVDSSGETTYKKTTSSALKGAIQLGITHTVGSLSTKPERDVLMQDFYVVESIFFPSEGSNLTPAHHYNDFRFKTYAPVAFRYFRELFGIRPDDYLYSLCSEPLIELSNSGASGSLFYVSSDDEFIIKTVQHKEAEFLQKLLPGYYMNLNQNPRTLLPKFYGLYCVQAGGKNIRIVVMNNLLPRSVKMHMKYDLKGSTYKRRASQKEREKTLPTFKDLDFLQDIPDGLFLDADMYSALCKTLQRDCLVLQSFKIMDYSLLMSIHNMDHAQREPMNSETQYSIDTRRPAPQKALYSTAMESIQGEARRGGTVETEDHMGGIPARNNKGERLLLYIGIIDILQSYRFVKKLEHSWKALVHDGDTVSVHRPGFYAERFQRFMCNTVFKKIPLKPSPTKKFRSGPSFSRRSGPSGNSCTPSQPTASGEHKAQVTTKAEVEPDIHLGRPDVLPQTPPLEEISEGSPVPGPSFSPAVGQPLQILNLSSTLEKLDVAESELTH</sequence>
<keyword id="KW-0067">ATP-binding</keyword>
<keyword id="KW-1003">Cell membrane</keyword>
<keyword id="KW-0966">Cell projection</keyword>
<keyword id="KW-0963">Cytoplasm</keyword>
<keyword id="KW-1017">Isopeptide bond</keyword>
<keyword id="KW-0418">Kinase</keyword>
<keyword id="KW-0443">Lipid metabolism</keyword>
<keyword id="KW-0472">Membrane</keyword>
<keyword id="KW-0547">Nucleotide-binding</keyword>
<keyword id="KW-0539">Nucleus</keyword>
<keyword id="KW-1185">Reference proteome</keyword>
<keyword id="KW-0808">Transferase</keyword>
<keyword id="KW-0832">Ubl conjugation</keyword>
<feature type="chain" id="PRO_0000424437" description="Phosphatidylinositol 4-phosphate 5-kinase type-1 alpha">
    <location>
        <begin position="1"/>
        <end position="546"/>
    </location>
</feature>
<feature type="domain" description="PIPK" evidence="3">
    <location>
        <begin position="65"/>
        <end position="433"/>
    </location>
</feature>
<feature type="region of interest" description="Disordered" evidence="4">
    <location>
        <begin position="441"/>
        <end position="522"/>
    </location>
</feature>
<feature type="compositionally biased region" description="Low complexity" evidence="4">
    <location>
        <begin position="449"/>
        <end position="461"/>
    </location>
</feature>
<feature type="compositionally biased region" description="Polar residues" evidence="4">
    <location>
        <begin position="462"/>
        <end position="471"/>
    </location>
</feature>
<feature type="compositionally biased region" description="Basic and acidic residues" evidence="4">
    <location>
        <begin position="473"/>
        <end position="493"/>
    </location>
</feature>
<feature type="cross-link" description="Glycyl lysine isopeptide (Lys-Gly) (interchain with G-Cter in ubiquitin)" evidence="2">
    <location>
        <position position="87"/>
    </location>
</feature>
<reference key="1">
    <citation type="submission" date="2004-09" db="EMBL/GenBank/DDBJ databases">
        <authorList>
            <person name="Soares M.B."/>
            <person name="Casavant T.L."/>
            <person name="Sheffield V.C."/>
            <person name="Bonaldo M.F."/>
            <person name="Bair T.B."/>
            <person name="Scheetz T.E."/>
            <person name="Snir E."/>
            <person name="Akabogu I."/>
            <person name="Bair J.L."/>
            <person name="Berger B."/>
            <person name="Crouch K."/>
            <person name="Davis A."/>
            <person name="Eystone M.E."/>
            <person name="Keppel C."/>
            <person name="Kucaba T.A."/>
            <person name="Lebeck M."/>
            <person name="Lin J.L."/>
            <person name="de Melo A.I.R."/>
            <person name="Rehmann J."/>
            <person name="Reiter R.S."/>
            <person name="Schaefer K."/>
            <person name="Smith C."/>
            <person name="Tack D."/>
            <person name="Trout K."/>
            <person name="Lin J.J.-C."/>
        </authorList>
    </citation>
    <scope>NUCLEOTIDE SEQUENCE [LARGE SCALE MRNA]</scope>
</reference>
<reference key="2">
    <citation type="journal article" date="2004" name="Nature">
        <title>Genome sequence of the Brown Norway rat yields insights into mammalian evolution.</title>
        <authorList>
            <person name="Gibbs R.A."/>
            <person name="Weinstock G.M."/>
            <person name="Metzker M.L."/>
            <person name="Muzny D.M."/>
            <person name="Sodergren E.J."/>
            <person name="Scherer S."/>
            <person name="Scott G."/>
            <person name="Steffen D."/>
            <person name="Worley K.C."/>
            <person name="Burch P.E."/>
            <person name="Okwuonu G."/>
            <person name="Hines S."/>
            <person name="Lewis L."/>
            <person name="Deramo C."/>
            <person name="Delgado O."/>
            <person name="Dugan-Rocha S."/>
            <person name="Miner G."/>
            <person name="Morgan M."/>
            <person name="Hawes A."/>
            <person name="Gill R."/>
            <person name="Holt R.A."/>
            <person name="Adams M.D."/>
            <person name="Amanatides P.G."/>
            <person name="Baden-Tillson H."/>
            <person name="Barnstead M."/>
            <person name="Chin S."/>
            <person name="Evans C.A."/>
            <person name="Ferriera S."/>
            <person name="Fosler C."/>
            <person name="Glodek A."/>
            <person name="Gu Z."/>
            <person name="Jennings D."/>
            <person name="Kraft C.L."/>
            <person name="Nguyen T."/>
            <person name="Pfannkoch C.M."/>
            <person name="Sitter C."/>
            <person name="Sutton G.G."/>
            <person name="Venter J.C."/>
            <person name="Woodage T."/>
            <person name="Smith D."/>
            <person name="Lee H.-M."/>
            <person name="Gustafson E."/>
            <person name="Cahill P."/>
            <person name="Kana A."/>
            <person name="Doucette-Stamm L."/>
            <person name="Weinstock K."/>
            <person name="Fechtel K."/>
            <person name="Weiss R.B."/>
            <person name="Dunn D.M."/>
            <person name="Green E.D."/>
            <person name="Blakesley R.W."/>
            <person name="Bouffard G.G."/>
            <person name="De Jong P.J."/>
            <person name="Osoegawa K."/>
            <person name="Zhu B."/>
            <person name="Marra M."/>
            <person name="Schein J."/>
            <person name="Bosdet I."/>
            <person name="Fjell C."/>
            <person name="Jones S."/>
            <person name="Krzywinski M."/>
            <person name="Mathewson C."/>
            <person name="Siddiqui A."/>
            <person name="Wye N."/>
            <person name="McPherson J."/>
            <person name="Zhao S."/>
            <person name="Fraser C.M."/>
            <person name="Shetty J."/>
            <person name="Shatsman S."/>
            <person name="Geer K."/>
            <person name="Chen Y."/>
            <person name="Abramzon S."/>
            <person name="Nierman W.C."/>
            <person name="Havlak P.H."/>
            <person name="Chen R."/>
            <person name="Durbin K.J."/>
            <person name="Egan A."/>
            <person name="Ren Y."/>
            <person name="Song X.-Z."/>
            <person name="Li B."/>
            <person name="Liu Y."/>
            <person name="Qin X."/>
            <person name="Cawley S."/>
            <person name="Cooney A.J."/>
            <person name="D'Souza L.M."/>
            <person name="Martin K."/>
            <person name="Wu J.Q."/>
            <person name="Gonzalez-Garay M.L."/>
            <person name="Jackson A.R."/>
            <person name="Kalafus K.J."/>
            <person name="McLeod M.P."/>
            <person name="Milosavljevic A."/>
            <person name="Virk D."/>
            <person name="Volkov A."/>
            <person name="Wheeler D.A."/>
            <person name="Zhang Z."/>
            <person name="Bailey J.A."/>
            <person name="Eichler E.E."/>
            <person name="Tuzun E."/>
            <person name="Birney E."/>
            <person name="Mongin E."/>
            <person name="Ureta-Vidal A."/>
            <person name="Woodwark C."/>
            <person name="Zdobnov E."/>
            <person name="Bork P."/>
            <person name="Suyama M."/>
            <person name="Torrents D."/>
            <person name="Alexandersson M."/>
            <person name="Trask B.J."/>
            <person name="Young J.M."/>
            <person name="Huang H."/>
            <person name="Wang H."/>
            <person name="Xing H."/>
            <person name="Daniels S."/>
            <person name="Gietzen D."/>
            <person name="Schmidt J."/>
            <person name="Stevens K."/>
            <person name="Vitt U."/>
            <person name="Wingrove J."/>
            <person name="Camara F."/>
            <person name="Mar Alba M."/>
            <person name="Abril J.F."/>
            <person name="Guigo R."/>
            <person name="Smit A."/>
            <person name="Dubchak I."/>
            <person name="Rubin E.M."/>
            <person name="Couronne O."/>
            <person name="Poliakov A."/>
            <person name="Huebner N."/>
            <person name="Ganten D."/>
            <person name="Goesele C."/>
            <person name="Hummel O."/>
            <person name="Kreitler T."/>
            <person name="Lee Y.-A."/>
            <person name="Monti J."/>
            <person name="Schulz H."/>
            <person name="Zimdahl H."/>
            <person name="Himmelbauer H."/>
            <person name="Lehrach H."/>
            <person name="Jacob H.J."/>
            <person name="Bromberg S."/>
            <person name="Gullings-Handley J."/>
            <person name="Jensen-Seaman M.I."/>
            <person name="Kwitek A.E."/>
            <person name="Lazar J."/>
            <person name="Pasko D."/>
            <person name="Tonellato P.J."/>
            <person name="Twigger S."/>
            <person name="Ponting C.P."/>
            <person name="Duarte J.M."/>
            <person name="Rice S."/>
            <person name="Goodstadt L."/>
            <person name="Beatson S.A."/>
            <person name="Emes R.D."/>
            <person name="Winter E.E."/>
            <person name="Webber C."/>
            <person name="Brandt P."/>
            <person name="Nyakatura G."/>
            <person name="Adetobi M."/>
            <person name="Chiaromonte F."/>
            <person name="Elnitski L."/>
            <person name="Eswara P."/>
            <person name="Hardison R.C."/>
            <person name="Hou M."/>
            <person name="Kolbe D."/>
            <person name="Makova K."/>
            <person name="Miller W."/>
            <person name="Nekrutenko A."/>
            <person name="Riemer C."/>
            <person name="Schwartz S."/>
            <person name="Taylor J."/>
            <person name="Yang S."/>
            <person name="Zhang Y."/>
            <person name="Lindpaintner K."/>
            <person name="Andrews T.D."/>
            <person name="Caccamo M."/>
            <person name="Clamp M."/>
            <person name="Clarke L."/>
            <person name="Curwen V."/>
            <person name="Durbin R.M."/>
            <person name="Eyras E."/>
            <person name="Searle S.M."/>
            <person name="Cooper G.M."/>
            <person name="Batzoglou S."/>
            <person name="Brudno M."/>
            <person name="Sidow A."/>
            <person name="Stone E.A."/>
            <person name="Payseur B.A."/>
            <person name="Bourque G."/>
            <person name="Lopez-Otin C."/>
            <person name="Puente X.S."/>
            <person name="Chakrabarti K."/>
            <person name="Chatterji S."/>
            <person name="Dewey C."/>
            <person name="Pachter L."/>
            <person name="Bray N."/>
            <person name="Yap V.B."/>
            <person name="Caspi A."/>
            <person name="Tesler G."/>
            <person name="Pevzner P.A."/>
            <person name="Haussler D."/>
            <person name="Roskin K.M."/>
            <person name="Baertsch R."/>
            <person name="Clawson H."/>
            <person name="Furey T.S."/>
            <person name="Hinrichs A.S."/>
            <person name="Karolchik D."/>
            <person name="Kent W.J."/>
            <person name="Rosenbloom K.R."/>
            <person name="Trumbower H."/>
            <person name="Weirauch M."/>
            <person name="Cooper D.N."/>
            <person name="Stenson P.D."/>
            <person name="Ma B."/>
            <person name="Brent M."/>
            <person name="Arumugam M."/>
            <person name="Shteynberg D."/>
            <person name="Copley R.R."/>
            <person name="Taylor M.S."/>
            <person name="Riethman H."/>
            <person name="Mudunuri U."/>
            <person name="Peterson J."/>
            <person name="Guyer M."/>
            <person name="Felsenfeld A."/>
            <person name="Old S."/>
            <person name="Mockrin S."/>
            <person name="Collins F.S."/>
        </authorList>
    </citation>
    <scope>NUCLEOTIDE SEQUENCE [LARGE SCALE GENOMIC DNA]</scope>
    <source>
        <strain>Brown Norway</strain>
    </source>
</reference>
<reference key="3">
    <citation type="journal article" date="2004" name="Cell. Signal.">
        <title>Diacylglycerol kinase zeta regulates phosphatidylinositol 4-phosphate 5-kinase Ialpha by a novel mechanism.</title>
        <authorList>
            <person name="Luo B."/>
            <person name="Prescott S.M."/>
            <person name="Topham M.K."/>
        </authorList>
    </citation>
    <scope>INTERACTION WITH DGKZ</scope>
</reference>
<comment type="function">
    <text evidence="1 2">Catalyzes the phosphorylation of phosphatidylinositol 4-phosphate (PtdIns(4)P/PI4P) to form phosphatidylinositol 4,5-bisphosphate (PtdIns(4,5)P2/PIP2), a lipid second messenger that regulates several cellular processes such as signal transduction, vesicle trafficking, actin cytoskeleton dynamics, cell adhesion, and cell motility. PtdIns(4,5)P2 can directly act as a second messenger or can be utilized as a precursor to generate other second messengers: inositol 1,4,5-trisphosphate (IP3), diacylglycerol (DAG) or phosphatidylinositol-3,4,5-trisphosphate (PtdIns(3,4,5)P3/PIP3) (By similarity). PIP5K1A-mediated phosphorylation of PtdIns(4)P is the predominant pathway for PtdIns(4,5)P2 synthesis (By similarity). Can also use phosphatidylinositol (PtdIns) as substrate in vitro (By similarity). Together with PIP5K1C, is required for phagocytosis, both enzymes regulating different types of actin remodeling at sequential steps. Promotes particle ingestion by activating the WAS GTPase-binding protein that induces Arp2/3 dependent actin polymerization at the nascent phagocytic cup. Together with PIP5K1B, is required, after stimulation by G-protein coupled receptors, for the synthesis of IP3 that will induce stable platelet adhesion (By similarity). Recruited to the plasma membrane by the E-cadherin/beta-catenin complex where it provides the substrate PtdIns(4,5)P2 for the production of PtdIns(3,4,5)P3, IP3 and DAG, that will mobilize internal calcium and drive keratinocyte differentiation (By similarity). Positively regulates insulin-induced translocation of SLC2A4 to the cell membrane in adipocytes. Together with PIP5K1C has a role during embryogenesis (By similarity). Independently of its catalytic activity, is required for membrane ruffling formation, actin organization and focal adhesion formation during directional cell migration by controlling integrin-induced translocation of the small GTPase RAC1 to the plasma membrane. Also functions in the nucleus where it acts as an activator of TUT1 adenylyltransferase activity in nuclear speckles, thereby regulating mRNA polyadenylation of a select set of mRNAs (By similarity).</text>
</comment>
<comment type="catalytic activity">
    <reaction evidence="2">
        <text>a 1,2-diacyl-sn-glycero-3-phospho-(1D-myo-inositol 4-phosphate) + ATP = a 1,2-diacyl-sn-glycero-3-phospho-(1D-myo-inositol-4,5-bisphosphate) + ADP + H(+)</text>
        <dbReference type="Rhea" id="RHEA:14425"/>
        <dbReference type="ChEBI" id="CHEBI:15378"/>
        <dbReference type="ChEBI" id="CHEBI:30616"/>
        <dbReference type="ChEBI" id="CHEBI:58178"/>
        <dbReference type="ChEBI" id="CHEBI:58456"/>
        <dbReference type="ChEBI" id="CHEBI:456216"/>
        <dbReference type="EC" id="2.7.1.68"/>
    </reaction>
    <physiologicalReaction direction="left-to-right" evidence="2">
        <dbReference type="Rhea" id="RHEA:14426"/>
    </physiologicalReaction>
</comment>
<comment type="catalytic activity">
    <reaction evidence="2">
        <text>1-octadecanoyl-2-(5Z,8Z,11Z,14Z)-eicosatetraenoyl-sn-glycero-3-phospho-1D-myo-inositol 4-phosphate + ATP = 1-octadecanoyl-2-(5Z,8Z,11Z,14Z)-eicosatetraenoyl-sn-glycero-3-phospho-1D-myo-inositol 4,5-bisphosphate + ADP + H(+)</text>
        <dbReference type="Rhea" id="RHEA:40363"/>
        <dbReference type="ChEBI" id="CHEBI:15378"/>
        <dbReference type="ChEBI" id="CHEBI:30616"/>
        <dbReference type="ChEBI" id="CHEBI:77136"/>
        <dbReference type="ChEBI" id="CHEBI:77137"/>
        <dbReference type="ChEBI" id="CHEBI:456216"/>
    </reaction>
    <physiologicalReaction direction="left-to-right" evidence="2">
        <dbReference type="Rhea" id="RHEA:40364"/>
    </physiologicalReaction>
</comment>
<comment type="catalytic activity">
    <reaction evidence="2">
        <text>1,2-dihexadecanoyl-sn-glycero-3-phospho-(1D-myo-inositol-4-phosphate) + ATP = 1,2-dihexadecanoyl-sn-glycero-3-phospho-(1D-myo-inositol-4,5-bisphosphate) + ADP + H(+)</text>
        <dbReference type="Rhea" id="RHEA:65356"/>
        <dbReference type="ChEBI" id="CHEBI:15378"/>
        <dbReference type="ChEBI" id="CHEBI:30616"/>
        <dbReference type="ChEBI" id="CHEBI:83423"/>
        <dbReference type="ChEBI" id="CHEBI:83436"/>
        <dbReference type="ChEBI" id="CHEBI:456216"/>
    </reaction>
    <physiologicalReaction direction="left-to-right" evidence="2">
        <dbReference type="Rhea" id="RHEA:65357"/>
    </physiologicalReaction>
</comment>
<comment type="catalytic activity">
    <reaction evidence="2">
        <text>1-octadecanoyl-2-(9Z)-octadecenoyl-sn-glycero-3-phospho-1D-myo-inositol 4-phosphate + ATP = 1-octadecanoyl-2-(9Z)-octadecenoyl-sn-glycero-3-phospho-1D-myo-inositol 4,5-bisphosphate + ADP + H(+)</text>
        <dbReference type="Rhea" id="RHEA:40367"/>
        <dbReference type="ChEBI" id="CHEBI:15378"/>
        <dbReference type="ChEBI" id="CHEBI:30616"/>
        <dbReference type="ChEBI" id="CHEBI:77139"/>
        <dbReference type="ChEBI" id="CHEBI:77140"/>
        <dbReference type="ChEBI" id="CHEBI:456216"/>
    </reaction>
    <physiologicalReaction direction="left-to-right" evidence="2">
        <dbReference type="Rhea" id="RHEA:40368"/>
    </physiologicalReaction>
</comment>
<comment type="catalytic activity">
    <reaction evidence="2">
        <text>1-octadecanoyl-2-(9Z)-octadecenoyl-sn-glycero-3-phospho-1D-myo-inositol + ATP = 1-octadecanoyl-2-(9Z)-octadecenoyl-sn-glycero-3-phospho-1D-myo-inositol 5-phosphate + ADP + H(+)</text>
        <dbReference type="Rhea" id="RHEA:40379"/>
        <dbReference type="ChEBI" id="CHEBI:15378"/>
        <dbReference type="ChEBI" id="CHEBI:30616"/>
        <dbReference type="ChEBI" id="CHEBI:77163"/>
        <dbReference type="ChEBI" id="CHEBI:77164"/>
        <dbReference type="ChEBI" id="CHEBI:456216"/>
    </reaction>
    <physiologicalReaction direction="left-to-right" evidence="2">
        <dbReference type="Rhea" id="RHEA:40380"/>
    </physiologicalReaction>
</comment>
<comment type="catalytic activity">
    <reaction evidence="2">
        <text>1-octadecanoyl-2-(9Z,12Z)-octadecadienoyl-sn-glycero-3-phospho-1D-myo-inositol + ATP = 1-octadecanoyl-2-(9Z,12Z)-octadecadienoyl-sn-glycero-3-phospho-1D-myo-inositol 5-phosphate + ADP + H(+)</text>
        <dbReference type="Rhea" id="RHEA:40383"/>
        <dbReference type="ChEBI" id="CHEBI:15378"/>
        <dbReference type="ChEBI" id="CHEBI:30616"/>
        <dbReference type="ChEBI" id="CHEBI:77158"/>
        <dbReference type="ChEBI" id="CHEBI:77159"/>
        <dbReference type="ChEBI" id="CHEBI:456216"/>
    </reaction>
    <physiologicalReaction direction="left-to-right" evidence="2">
        <dbReference type="Rhea" id="RHEA:40384"/>
    </physiologicalReaction>
</comment>
<comment type="catalytic activity">
    <reaction evidence="2">
        <text>1-octadecanoyl-2-(5Z,8Z,11Z,14Z-eicosatetraenoyl)-sn-glycero-3-phospho-(1D-myo-inositol) + ATP = 1-octadecanoyl-2-(5Z,8Z,11Z,14Z)-eicosatetraenoyl-sn-glycero-3-phospho-1D-myo-inositol 5-phosphate + ADP + H(+)</text>
        <dbReference type="Rhea" id="RHEA:40375"/>
        <dbReference type="ChEBI" id="CHEBI:15378"/>
        <dbReference type="ChEBI" id="CHEBI:30616"/>
        <dbReference type="ChEBI" id="CHEBI:77160"/>
        <dbReference type="ChEBI" id="CHEBI:133606"/>
        <dbReference type="ChEBI" id="CHEBI:456216"/>
    </reaction>
    <physiologicalReaction direction="left-to-right" evidence="2">
        <dbReference type="Rhea" id="RHEA:40376"/>
    </physiologicalReaction>
</comment>
<comment type="catalytic activity">
    <reaction evidence="2">
        <text>1,2-di-(9Z,12Z)-octadecadienoyl-sn-glycero-3-phospho-1D-myo-inositol + ATP = 1,2-di(9Z,12Z)-octadecadienoyl-sn-glycero-3-phospho-1D-myo-inositol 5-phosphate + ADP + H(+)</text>
        <dbReference type="Rhea" id="RHEA:40387"/>
        <dbReference type="ChEBI" id="CHEBI:15378"/>
        <dbReference type="ChEBI" id="CHEBI:30616"/>
        <dbReference type="ChEBI" id="CHEBI:77165"/>
        <dbReference type="ChEBI" id="CHEBI:77167"/>
        <dbReference type="ChEBI" id="CHEBI:456216"/>
    </reaction>
    <physiologicalReaction direction="left-to-right" evidence="2">
        <dbReference type="Rhea" id="RHEA:40388"/>
    </physiologicalReaction>
</comment>
<comment type="subunit">
    <text evidence="1 2 5">Interacts with RAC1. Interacts with TUT1. Forms a complex with CDH1/E-cadherin, CTNNB1/beta-catenin and CTNND1 at the plasma membrane upon calcium stimulation (By similarity). Found in a ternary complex with IRS1 and DGKZ in the absence of insulin stimulation (By similarity). Interacts with DGKZ (PubMed:15157668). Interacts with PIP4K2C; the interaction inhibits PIP5K1A kinase activity (By similarity).</text>
</comment>
<comment type="subcellular location">
    <subcellularLocation>
        <location evidence="1">Cell membrane</location>
    </subcellularLocation>
    <subcellularLocation>
        <location evidence="1">Cytoplasm</location>
    </subcellularLocation>
    <subcellularLocation>
        <location evidence="2">Nucleus</location>
    </subcellularLocation>
    <subcellularLocation>
        <location evidence="2">Nucleus speckle</location>
    </subcellularLocation>
    <subcellularLocation>
        <location evidence="2">Cell projection</location>
        <location evidence="2">Ruffle</location>
    </subcellularLocation>
    <subcellularLocation>
        <location evidence="2">Cell projection</location>
        <location evidence="2">Lamellipodium</location>
    </subcellularLocation>
    <text evidence="2">Colocalizes with RAC1 at actin-rich membrane ruffles. Localizes to nuclear speckles and associates with TUT1 to regulate polyadenylation of selected mRNAs.</text>
</comment>
<protein>
    <recommendedName>
        <fullName evidence="2">Phosphatidylinositol 4-phosphate 5-kinase type-1 alpha</fullName>
        <shortName evidence="2">PIP5K1-alpha</shortName>
        <shortName evidence="2">PtdIns(4)P-5-kinase 1 alpha</shortName>
        <ecNumber evidence="2">2.7.1.68</ecNumber>
    </recommendedName>
    <alternativeName>
        <fullName evidence="2">68 kDa type I phosphatidylinositol 4-phosphate 5-kinase</fullName>
    </alternativeName>
    <alternativeName>
        <fullName evidence="2">Phosphatidylinositol 4-phosphate 5-kinase type I alpha</fullName>
        <shortName evidence="2">PIP5KIalpha</shortName>
    </alternativeName>
</protein>
<name>PI51A_RAT</name>
<accession>D3ZSI8</accession>
<dbReference type="EC" id="2.7.1.68" evidence="2"/>
<dbReference type="EMBL" id="AY724476">
    <property type="status" value="NOT_ANNOTATED_CDS"/>
    <property type="molecule type" value="mRNA"/>
</dbReference>
<dbReference type="EMBL" id="AABR06019271">
    <property type="status" value="NOT_ANNOTATED_CDS"/>
    <property type="molecule type" value="Genomic_DNA"/>
</dbReference>
<dbReference type="RefSeq" id="NP_001036086.2">
    <property type="nucleotide sequence ID" value="NM_001042621.2"/>
</dbReference>
<dbReference type="SMR" id="D3ZSI8"/>
<dbReference type="FunCoup" id="D3ZSI8">
    <property type="interactions" value="2635"/>
</dbReference>
<dbReference type="STRING" id="10116.ENSRNOP00000028609"/>
<dbReference type="iPTMnet" id="D3ZSI8"/>
<dbReference type="PhosphoSitePlus" id="D3ZSI8"/>
<dbReference type="PaxDb" id="10116-ENSRNOP00000028609"/>
<dbReference type="PeptideAtlas" id="D3ZSI8"/>
<dbReference type="GeneID" id="365865"/>
<dbReference type="UCSC" id="RGD:1306127">
    <property type="organism name" value="rat"/>
</dbReference>
<dbReference type="AGR" id="RGD:1306127"/>
<dbReference type="RGD" id="1306127">
    <property type="gene designation" value="Pip5k1a"/>
</dbReference>
<dbReference type="VEuPathDB" id="HostDB:ENSRNOG00000021068"/>
<dbReference type="eggNOG" id="KOG0229">
    <property type="taxonomic scope" value="Eukaryota"/>
</dbReference>
<dbReference type="HOGENOM" id="CLU_004312_5_1_1"/>
<dbReference type="InParanoid" id="D3ZSI8"/>
<dbReference type="OrthoDB" id="70770at2759"/>
<dbReference type="PhylomeDB" id="D3ZSI8"/>
<dbReference type="TreeFam" id="TF319618"/>
<dbReference type="Reactome" id="R-RNO-1660499">
    <property type="pathway name" value="Synthesis of PIPs at the plasma membrane"/>
</dbReference>
<dbReference type="Reactome" id="R-RNO-6811558">
    <property type="pathway name" value="PI5P, PP2A and IER3 Regulate PI3K/AKT Signaling"/>
</dbReference>
<dbReference type="PRO" id="PR:D3ZSI8"/>
<dbReference type="Proteomes" id="UP000002494">
    <property type="component" value="Chromosome 2"/>
</dbReference>
<dbReference type="Bgee" id="ENSRNOG00000021068">
    <property type="expression patterns" value="Expressed in skeletal muscle tissue and 19 other cell types or tissues"/>
</dbReference>
<dbReference type="GO" id="GO:0005829">
    <property type="term" value="C:cytosol"/>
    <property type="evidence" value="ECO:0000266"/>
    <property type="project" value="RGD"/>
</dbReference>
<dbReference type="GO" id="GO:0030027">
    <property type="term" value="C:lamellipodium"/>
    <property type="evidence" value="ECO:0000266"/>
    <property type="project" value="RGD"/>
</dbReference>
<dbReference type="GO" id="GO:0005847">
    <property type="term" value="C:mRNA cleavage and polyadenylation specificity factor complex"/>
    <property type="evidence" value="ECO:0000266"/>
    <property type="project" value="RGD"/>
</dbReference>
<dbReference type="GO" id="GO:0016607">
    <property type="term" value="C:nuclear speck"/>
    <property type="evidence" value="ECO:0000266"/>
    <property type="project" value="RGD"/>
</dbReference>
<dbReference type="GO" id="GO:0005634">
    <property type="term" value="C:nucleus"/>
    <property type="evidence" value="ECO:0000266"/>
    <property type="project" value="RGD"/>
</dbReference>
<dbReference type="GO" id="GO:0005886">
    <property type="term" value="C:plasma membrane"/>
    <property type="evidence" value="ECO:0000266"/>
    <property type="project" value="RGD"/>
</dbReference>
<dbReference type="GO" id="GO:0032587">
    <property type="term" value="C:ruffle membrane"/>
    <property type="evidence" value="ECO:0000266"/>
    <property type="project" value="RGD"/>
</dbReference>
<dbReference type="GO" id="GO:0016308">
    <property type="term" value="F:1-phosphatidylinositol-4-phosphate 5-kinase activity"/>
    <property type="evidence" value="ECO:0000250"/>
    <property type="project" value="UniProtKB"/>
</dbReference>
<dbReference type="GO" id="GO:0005524">
    <property type="term" value="F:ATP binding"/>
    <property type="evidence" value="ECO:0007669"/>
    <property type="project" value="UniProtKB-KW"/>
</dbReference>
<dbReference type="GO" id="GO:0019900">
    <property type="term" value="F:kinase binding"/>
    <property type="evidence" value="ECO:0000266"/>
    <property type="project" value="RGD"/>
</dbReference>
<dbReference type="GO" id="GO:0030036">
    <property type="term" value="P:actin cytoskeleton organization"/>
    <property type="evidence" value="ECO:0000266"/>
    <property type="project" value="RGD"/>
</dbReference>
<dbReference type="GO" id="GO:0060326">
    <property type="term" value="P:cell chemotaxis"/>
    <property type="evidence" value="ECO:0000266"/>
    <property type="project" value="RGD"/>
</dbReference>
<dbReference type="GO" id="GO:0010761">
    <property type="term" value="P:fibroblast migration"/>
    <property type="evidence" value="ECO:0000266"/>
    <property type="project" value="RGD"/>
</dbReference>
<dbReference type="GO" id="GO:0048041">
    <property type="term" value="P:focal adhesion assembly"/>
    <property type="evidence" value="ECO:0000266"/>
    <property type="project" value="RGD"/>
</dbReference>
<dbReference type="GO" id="GO:0006661">
    <property type="term" value="P:phosphatidylinositol biosynthetic process"/>
    <property type="evidence" value="ECO:0000266"/>
    <property type="project" value="RGD"/>
</dbReference>
<dbReference type="GO" id="GO:0046488">
    <property type="term" value="P:phosphatidylinositol metabolic process"/>
    <property type="evidence" value="ECO:0000266"/>
    <property type="project" value="RGD"/>
</dbReference>
<dbReference type="GO" id="GO:0046854">
    <property type="term" value="P:phosphatidylinositol phosphate biosynthetic process"/>
    <property type="evidence" value="ECO:0000318"/>
    <property type="project" value="GO_Central"/>
</dbReference>
<dbReference type="GO" id="GO:0008654">
    <property type="term" value="P:phospholipid biosynthetic process"/>
    <property type="evidence" value="ECO:0000266"/>
    <property type="project" value="RGD"/>
</dbReference>
<dbReference type="GO" id="GO:0072659">
    <property type="term" value="P:protein localization to plasma membrane"/>
    <property type="evidence" value="ECO:0000266"/>
    <property type="project" value="RGD"/>
</dbReference>
<dbReference type="GO" id="GO:0097178">
    <property type="term" value="P:ruffle assembly"/>
    <property type="evidence" value="ECO:0000266"/>
    <property type="project" value="RGD"/>
</dbReference>
<dbReference type="CDD" id="cd17306">
    <property type="entry name" value="PIPKc_PIP5K1A_like"/>
    <property type="match status" value="1"/>
</dbReference>
<dbReference type="FunFam" id="3.30.800.10:FF:000001">
    <property type="entry name" value="phosphatidylinositol 4-phosphate 5-kinase type-1 gamma"/>
    <property type="match status" value="1"/>
</dbReference>
<dbReference type="Gene3D" id="3.30.810.10">
    <property type="entry name" value="2-Layer Sandwich"/>
    <property type="match status" value="1"/>
</dbReference>
<dbReference type="Gene3D" id="3.30.800.10">
    <property type="entry name" value="Phosphatidylinositol Phosphate Kinase II Beta"/>
    <property type="match status" value="1"/>
</dbReference>
<dbReference type="InterPro" id="IPR027483">
    <property type="entry name" value="PInositol-4-P-4/5-kinase_C_sf"/>
</dbReference>
<dbReference type="InterPro" id="IPR002498">
    <property type="entry name" value="PInositol-4-P-4/5-kinase_core"/>
</dbReference>
<dbReference type="InterPro" id="IPR027484">
    <property type="entry name" value="PInositol-4-P-5-kinase_N"/>
</dbReference>
<dbReference type="InterPro" id="IPR023610">
    <property type="entry name" value="PInositol-4/5-P-5/4-kinase"/>
</dbReference>
<dbReference type="PANTHER" id="PTHR23086:SF54">
    <property type="entry name" value="PHOSPHATIDYLINOSITOL 4-PHOSPHATE 5-KINASE TYPE-1 ALPHA"/>
    <property type="match status" value="1"/>
</dbReference>
<dbReference type="PANTHER" id="PTHR23086">
    <property type="entry name" value="PHOSPHATIDYLINOSITOL-4-PHOSPHATE 5-KINASE"/>
    <property type="match status" value="1"/>
</dbReference>
<dbReference type="Pfam" id="PF01504">
    <property type="entry name" value="PIP5K"/>
    <property type="match status" value="1"/>
</dbReference>
<dbReference type="SMART" id="SM00330">
    <property type="entry name" value="PIPKc"/>
    <property type="match status" value="1"/>
</dbReference>
<dbReference type="SUPFAM" id="SSF56104">
    <property type="entry name" value="SAICAR synthase-like"/>
    <property type="match status" value="1"/>
</dbReference>
<dbReference type="PROSITE" id="PS51455">
    <property type="entry name" value="PIPK"/>
    <property type="match status" value="1"/>
</dbReference>
<organism>
    <name type="scientific">Rattus norvegicus</name>
    <name type="common">Rat</name>
    <dbReference type="NCBI Taxonomy" id="10116"/>
    <lineage>
        <taxon>Eukaryota</taxon>
        <taxon>Metazoa</taxon>
        <taxon>Chordata</taxon>
        <taxon>Craniata</taxon>
        <taxon>Vertebrata</taxon>
        <taxon>Euteleostomi</taxon>
        <taxon>Mammalia</taxon>
        <taxon>Eutheria</taxon>
        <taxon>Euarchontoglires</taxon>
        <taxon>Glires</taxon>
        <taxon>Rodentia</taxon>
        <taxon>Myomorpha</taxon>
        <taxon>Muroidea</taxon>
        <taxon>Muridae</taxon>
        <taxon>Murinae</taxon>
        <taxon>Rattus</taxon>
    </lineage>
</organism>
<gene>
    <name evidence="6" type="primary">Pip5k1a</name>
</gene>